<evidence type="ECO:0000255" key="1"/>
<evidence type="ECO:0000269" key="2">
    <source>
    </source>
</evidence>
<accession>P30237</accession>
<accession>Q89429</accession>
<feature type="signal peptide" evidence="1">
    <location>
        <begin position="1"/>
        <end position="23"/>
    </location>
</feature>
<feature type="chain" id="PRO_0000106108" description="Non-structural protein 3a">
    <location>
        <begin position="24"/>
        <end position="57"/>
    </location>
</feature>
<gene>
    <name type="ORF">3a</name>
</gene>
<organism>
    <name type="scientific">Avian infectious bronchitis virus (strain Beaudette)</name>
    <name type="common">IBV</name>
    <dbReference type="NCBI Taxonomy" id="11122"/>
    <lineage>
        <taxon>Viruses</taxon>
        <taxon>Riboviria</taxon>
        <taxon>Orthornavirae</taxon>
        <taxon>Pisuviricota</taxon>
        <taxon>Pisoniviricetes</taxon>
        <taxon>Nidovirales</taxon>
        <taxon>Cornidovirineae</taxon>
        <taxon>Coronaviridae</taxon>
        <taxon>Orthocoronavirinae</taxon>
        <taxon>Gammacoronavirus</taxon>
        <taxon>Igacovirus</taxon>
        <taxon>Avian coronavirus</taxon>
    </lineage>
</organism>
<protein>
    <recommendedName>
        <fullName>Non-structural protein 3a</fullName>
        <shortName>ns3a</shortName>
    </recommendedName>
    <alternativeName>
        <fullName>Accessory protein 3a</fullName>
    </alternativeName>
</protein>
<reference key="1">
    <citation type="journal article" date="1987" name="Adv. Exp. Med. Biol.">
        <title>Identification of a new gene product encoded by mRNA D of infectious bronchitis virus.</title>
        <authorList>
            <person name="Smith A.R."/>
            <person name="Boursnell M.E.G."/>
            <person name="Binns M.M."/>
            <person name="Brown T.D.K."/>
            <person name="Inglis S.C."/>
        </authorList>
    </citation>
    <scope>NUCLEOTIDE SEQUENCE [MRNA]</scope>
</reference>
<reference key="2">
    <citation type="journal article" date="1991" name="Virology">
        <title>A polycistronic mRNA specified by the coronavirus infectious bronchitis virus.</title>
        <authorList>
            <person name="Liu D.X."/>
            <person name="Cavanagh D."/>
            <person name="Green P."/>
            <person name="Inglis S.C."/>
        </authorList>
    </citation>
    <scope>NUCLEOTIDE SEQUENCE [MRNA]</scope>
</reference>
<reference key="3">
    <citation type="journal article" date="1985" name="J. Gen. Virol.">
        <title>Sequencing of coronavirus IBV genomic RNA: three open reading frames in the 5' 'unique' region of mRNA D.</title>
        <authorList>
            <person name="Boursnell M.E.G."/>
            <person name="Binns M.M."/>
            <person name="Brown T.D.K."/>
        </authorList>
    </citation>
    <scope>NUCLEOTIDE SEQUENCE [GENOMIC RNA]</scope>
</reference>
<reference key="4">
    <citation type="journal article" date="1987" name="J. Gen. Virol.">
        <title>Completion of the sequence of the genome of the coronavirus avian infectious bronchitis virus.</title>
        <authorList>
            <person name="Boursnell M.E.G."/>
            <person name="Brown T.D.K."/>
            <person name="Foulds I.J."/>
            <person name="Green P.F."/>
            <person name="Tomley F.M."/>
            <person name="Binns M.M."/>
        </authorList>
    </citation>
    <scope>NUCLEOTIDE SEQUENCE [GENOMIC RNA]</scope>
</reference>
<reference key="5">
    <citation type="journal article" date="2005" name="Virology">
        <title>In vitro assembled, recombinant infectious bronchitis viruses demonstrate that the 5a open reading frame is not essential for replication.</title>
        <authorList>
            <person name="Youn S."/>
            <person name="Leibowitz J.L."/>
            <person name="Collisson E.W."/>
        </authorList>
    </citation>
    <scope>NUCLEOTIDE SEQUENCE [MRNA]</scope>
</reference>
<reference key="6">
    <citation type="journal article" date="2005" name="Biochem. Biophys. Res. Commun.">
        <title>Selection of and recombination between minor variants lead to the adaptation of an avian coronavirus to primate cells.</title>
        <authorList>
            <person name="Fang S.G."/>
            <person name="Shen S."/>
            <person name="Tay F.P."/>
            <person name="Liu D.X."/>
        </authorList>
    </citation>
    <scope>NUCLEOTIDE SEQUENCE [GENOMIC RNA]</scope>
    <source>
        <strain>Isolate IBV-EP3</strain>
        <strain>Isolate Vero cell-adapted p65</strain>
    </source>
</reference>
<reference key="7">
    <citation type="journal article" date="2015" name="J. Virol.">
        <title>Infectious Bronchitis Coronavirus Inhibits STAT1 Signaling and Requires Accessory Proteins for Resistance to Type I Interferon Activity.</title>
        <authorList>
            <person name="Kint J."/>
            <person name="Dickhout A."/>
            <person name="Kutter J."/>
            <person name="Maier H.J."/>
            <person name="Britton P."/>
            <person name="Koumans J."/>
            <person name="Pijlman G.P."/>
            <person name="Fros J.J."/>
            <person name="Wiegertjes G.F."/>
            <person name="Forlenza M."/>
        </authorList>
    </citation>
    <scope>FUNCTION</scope>
</reference>
<dbReference type="EMBL" id="M27435">
    <property type="protein sequence ID" value="AAA46230.1"/>
    <property type="molecule type" value="mRNA"/>
</dbReference>
<dbReference type="EMBL" id="AY692454">
    <property type="protein sequence ID" value="AAV98209.1"/>
    <property type="molecule type" value="mRNA"/>
</dbReference>
<dbReference type="EMBL" id="M95169">
    <property type="protein sequence ID" value="AAA70236.1"/>
    <property type="molecule type" value="Genomic_RNA"/>
</dbReference>
<dbReference type="EMBL" id="DQ001338">
    <property type="protein sequence ID" value="AAY24424.1"/>
    <property type="molecule type" value="Genomic_RNA"/>
</dbReference>
<dbReference type="EMBL" id="DQ001339">
    <property type="protein sequence ID" value="AAY24434.1"/>
    <property type="molecule type" value="Genomic_RNA"/>
</dbReference>
<dbReference type="PIR" id="A41038">
    <property type="entry name" value="WMIHB1"/>
</dbReference>
<dbReference type="SMR" id="P30237"/>
<dbReference type="Proteomes" id="UP000006717">
    <property type="component" value="Segment"/>
</dbReference>
<dbReference type="Proteomes" id="UP000107149">
    <property type="component" value="Genome"/>
</dbReference>
<dbReference type="Proteomes" id="UP000180341">
    <property type="component" value="Genome"/>
</dbReference>
<dbReference type="Proteomes" id="UP000180342">
    <property type="component" value="Genome"/>
</dbReference>
<dbReference type="GO" id="GO:0052170">
    <property type="term" value="P:symbiont-mediated suppression of host innate immune response"/>
    <property type="evidence" value="ECO:0007669"/>
    <property type="project" value="UniProtKB-KW"/>
</dbReference>
<dbReference type="InterPro" id="IPR005214">
    <property type="entry name" value="IBV_3A"/>
</dbReference>
<dbReference type="Pfam" id="PF03617">
    <property type="entry name" value="IBV_3A"/>
    <property type="match status" value="1"/>
</dbReference>
<sequence>MIQSPTSFLIVLILLWCKLVLSCFREFIIALQQLIQVLLQIINSNLQSRLTLWHSLD</sequence>
<comment type="function">
    <text evidence="2">Involved in resistance to IFN.</text>
</comment>
<proteinExistence type="inferred from homology"/>
<organismHost>
    <name type="scientific">Gallus gallus</name>
    <name type="common">Chicken</name>
    <dbReference type="NCBI Taxonomy" id="9031"/>
</organismHost>
<keyword id="KW-0945">Host-virus interaction</keyword>
<keyword id="KW-1090">Inhibition of host innate immune response by virus</keyword>
<keyword id="KW-0922">Interferon antiviral system evasion</keyword>
<keyword id="KW-1185">Reference proteome</keyword>
<keyword id="KW-0732">Signal</keyword>
<keyword id="KW-0899">Viral immunoevasion</keyword>
<name>NS3A_IBVB</name>